<accession>B8G7X5</accession>
<name>LEUD_CHLAD</name>
<reference key="1">
    <citation type="submission" date="2008-12" db="EMBL/GenBank/DDBJ databases">
        <title>Complete sequence of Chloroflexus aggregans DSM 9485.</title>
        <authorList>
            <consortium name="US DOE Joint Genome Institute"/>
            <person name="Lucas S."/>
            <person name="Copeland A."/>
            <person name="Lapidus A."/>
            <person name="Glavina del Rio T."/>
            <person name="Dalin E."/>
            <person name="Tice H."/>
            <person name="Pitluck S."/>
            <person name="Foster B."/>
            <person name="Larimer F."/>
            <person name="Land M."/>
            <person name="Hauser L."/>
            <person name="Kyrpides N."/>
            <person name="Mikhailova N."/>
            <person name="Bryant D.A."/>
            <person name="Richardson P."/>
        </authorList>
    </citation>
    <scope>NUCLEOTIDE SEQUENCE [LARGE SCALE GENOMIC DNA]</scope>
    <source>
        <strain>MD-66 / DSM 9485</strain>
    </source>
</reference>
<sequence>MEPISTITGKVVVLPVENIDTDQIIPARFLKVTDKSGLAAGLFEAWRYLPDGTLNPDFPLNRPEAAGATILISGRNFGCGSSREHAPWALQDYGFQAVIAPSFADIFRNNALKIGLLPVMVEQSVYDELVVMYANDPSMVLTIDLAAQIVALPDGRQVHFPIDAFSKYCLLHGVDQLGFLLQQEAAIAAYEAAHPQPVQTTVRR</sequence>
<protein>
    <recommendedName>
        <fullName evidence="1">3-isopropylmalate dehydratase small subunit</fullName>
        <ecNumber evidence="1">4.2.1.33</ecNumber>
    </recommendedName>
    <alternativeName>
        <fullName evidence="1">Alpha-IPM isomerase</fullName>
        <shortName evidence="1">IPMI</shortName>
    </alternativeName>
    <alternativeName>
        <fullName evidence="1">Isopropylmalate isomerase</fullName>
    </alternativeName>
</protein>
<feature type="chain" id="PRO_1000149408" description="3-isopropylmalate dehydratase small subunit">
    <location>
        <begin position="1"/>
        <end position="204"/>
    </location>
</feature>
<gene>
    <name evidence="1" type="primary">leuD</name>
    <name type="ordered locus">Cagg_1246</name>
</gene>
<proteinExistence type="inferred from homology"/>
<comment type="function">
    <text evidence="1">Catalyzes the isomerization between 2-isopropylmalate and 3-isopropylmalate, via the formation of 2-isopropylmaleate.</text>
</comment>
<comment type="catalytic activity">
    <reaction evidence="1">
        <text>(2R,3S)-3-isopropylmalate = (2S)-2-isopropylmalate</text>
        <dbReference type="Rhea" id="RHEA:32287"/>
        <dbReference type="ChEBI" id="CHEBI:1178"/>
        <dbReference type="ChEBI" id="CHEBI:35121"/>
        <dbReference type="EC" id="4.2.1.33"/>
    </reaction>
</comment>
<comment type="pathway">
    <text evidence="1">Amino-acid biosynthesis; L-leucine biosynthesis; L-leucine from 3-methyl-2-oxobutanoate: step 2/4.</text>
</comment>
<comment type="subunit">
    <text evidence="1">Heterodimer of LeuC and LeuD.</text>
</comment>
<comment type="similarity">
    <text evidence="1">Belongs to the LeuD family. LeuD type 1 subfamily.</text>
</comment>
<evidence type="ECO:0000255" key="1">
    <source>
        <dbReference type="HAMAP-Rule" id="MF_01031"/>
    </source>
</evidence>
<keyword id="KW-0028">Amino-acid biosynthesis</keyword>
<keyword id="KW-0100">Branched-chain amino acid biosynthesis</keyword>
<keyword id="KW-0432">Leucine biosynthesis</keyword>
<keyword id="KW-0456">Lyase</keyword>
<dbReference type="EC" id="4.2.1.33" evidence="1"/>
<dbReference type="EMBL" id="CP001337">
    <property type="protein sequence ID" value="ACL24154.1"/>
    <property type="molecule type" value="Genomic_DNA"/>
</dbReference>
<dbReference type="RefSeq" id="WP_012616518.1">
    <property type="nucleotide sequence ID" value="NC_011831.1"/>
</dbReference>
<dbReference type="SMR" id="B8G7X5"/>
<dbReference type="STRING" id="326427.Cagg_1246"/>
<dbReference type="KEGG" id="cag:Cagg_1246"/>
<dbReference type="eggNOG" id="COG0066">
    <property type="taxonomic scope" value="Bacteria"/>
</dbReference>
<dbReference type="HOGENOM" id="CLU_081378_0_3_0"/>
<dbReference type="OrthoDB" id="9777465at2"/>
<dbReference type="UniPathway" id="UPA00048">
    <property type="reaction ID" value="UER00071"/>
</dbReference>
<dbReference type="Proteomes" id="UP000002508">
    <property type="component" value="Chromosome"/>
</dbReference>
<dbReference type="GO" id="GO:0009316">
    <property type="term" value="C:3-isopropylmalate dehydratase complex"/>
    <property type="evidence" value="ECO:0007669"/>
    <property type="project" value="InterPro"/>
</dbReference>
<dbReference type="GO" id="GO:0003861">
    <property type="term" value="F:3-isopropylmalate dehydratase activity"/>
    <property type="evidence" value="ECO:0007669"/>
    <property type="project" value="UniProtKB-UniRule"/>
</dbReference>
<dbReference type="GO" id="GO:0009098">
    <property type="term" value="P:L-leucine biosynthetic process"/>
    <property type="evidence" value="ECO:0007669"/>
    <property type="project" value="UniProtKB-UniRule"/>
</dbReference>
<dbReference type="CDD" id="cd01577">
    <property type="entry name" value="IPMI_Swivel"/>
    <property type="match status" value="1"/>
</dbReference>
<dbReference type="FunFam" id="3.20.19.10:FF:000003">
    <property type="entry name" value="3-isopropylmalate dehydratase small subunit"/>
    <property type="match status" value="1"/>
</dbReference>
<dbReference type="Gene3D" id="3.20.19.10">
    <property type="entry name" value="Aconitase, domain 4"/>
    <property type="match status" value="1"/>
</dbReference>
<dbReference type="HAMAP" id="MF_01031">
    <property type="entry name" value="LeuD_type1"/>
    <property type="match status" value="1"/>
</dbReference>
<dbReference type="InterPro" id="IPR004431">
    <property type="entry name" value="3-IsopropMal_deHydase_ssu"/>
</dbReference>
<dbReference type="InterPro" id="IPR015928">
    <property type="entry name" value="Aconitase/3IPM_dehydase_swvl"/>
</dbReference>
<dbReference type="InterPro" id="IPR000573">
    <property type="entry name" value="AconitaseA/IPMdHydase_ssu_swvl"/>
</dbReference>
<dbReference type="InterPro" id="IPR033940">
    <property type="entry name" value="IPMI_Swivel"/>
</dbReference>
<dbReference type="InterPro" id="IPR050075">
    <property type="entry name" value="LeuD"/>
</dbReference>
<dbReference type="NCBIfam" id="TIGR00171">
    <property type="entry name" value="leuD"/>
    <property type="match status" value="1"/>
</dbReference>
<dbReference type="NCBIfam" id="NF002458">
    <property type="entry name" value="PRK01641.1"/>
    <property type="match status" value="1"/>
</dbReference>
<dbReference type="PANTHER" id="PTHR43345:SF5">
    <property type="entry name" value="3-ISOPROPYLMALATE DEHYDRATASE SMALL SUBUNIT"/>
    <property type="match status" value="1"/>
</dbReference>
<dbReference type="PANTHER" id="PTHR43345">
    <property type="entry name" value="3-ISOPROPYLMALATE DEHYDRATASE SMALL SUBUNIT 2-RELATED-RELATED"/>
    <property type="match status" value="1"/>
</dbReference>
<dbReference type="Pfam" id="PF00694">
    <property type="entry name" value="Aconitase_C"/>
    <property type="match status" value="1"/>
</dbReference>
<dbReference type="SUPFAM" id="SSF52016">
    <property type="entry name" value="LeuD/IlvD-like"/>
    <property type="match status" value="1"/>
</dbReference>
<organism>
    <name type="scientific">Chloroflexus aggregans (strain MD-66 / DSM 9485)</name>
    <dbReference type="NCBI Taxonomy" id="326427"/>
    <lineage>
        <taxon>Bacteria</taxon>
        <taxon>Bacillati</taxon>
        <taxon>Chloroflexota</taxon>
        <taxon>Chloroflexia</taxon>
        <taxon>Chloroflexales</taxon>
        <taxon>Chloroflexineae</taxon>
        <taxon>Chloroflexaceae</taxon>
        <taxon>Chloroflexus</taxon>
    </lineage>
</organism>